<keyword id="KW-0413">Isomerase</keyword>
<keyword id="KW-0819">tRNA processing</keyword>
<proteinExistence type="inferred from homology"/>
<dbReference type="EC" id="5.4.99.12" evidence="1"/>
<dbReference type="EMBL" id="CP001029">
    <property type="protein sequence ID" value="ACB79764.1"/>
    <property type="molecule type" value="Genomic_DNA"/>
</dbReference>
<dbReference type="RefSeq" id="WP_012453512.1">
    <property type="nucleotide sequence ID" value="NC_010725.1"/>
</dbReference>
<dbReference type="SMR" id="B1ZGA6"/>
<dbReference type="STRING" id="441620.Mpop_1600"/>
<dbReference type="KEGG" id="mpo:Mpop_1600"/>
<dbReference type="eggNOG" id="COG0101">
    <property type="taxonomic scope" value="Bacteria"/>
</dbReference>
<dbReference type="HOGENOM" id="CLU_014673_0_2_5"/>
<dbReference type="OrthoDB" id="9811823at2"/>
<dbReference type="Proteomes" id="UP000007136">
    <property type="component" value="Chromosome"/>
</dbReference>
<dbReference type="GO" id="GO:0003723">
    <property type="term" value="F:RNA binding"/>
    <property type="evidence" value="ECO:0007669"/>
    <property type="project" value="InterPro"/>
</dbReference>
<dbReference type="GO" id="GO:0160147">
    <property type="term" value="F:tRNA pseudouridine(38-40) synthase activity"/>
    <property type="evidence" value="ECO:0007669"/>
    <property type="project" value="UniProtKB-EC"/>
</dbReference>
<dbReference type="GO" id="GO:0031119">
    <property type="term" value="P:tRNA pseudouridine synthesis"/>
    <property type="evidence" value="ECO:0007669"/>
    <property type="project" value="UniProtKB-UniRule"/>
</dbReference>
<dbReference type="CDD" id="cd02570">
    <property type="entry name" value="PseudoU_synth_EcTruA"/>
    <property type="match status" value="1"/>
</dbReference>
<dbReference type="FunFam" id="3.30.70.580:FF:000001">
    <property type="entry name" value="tRNA pseudouridine synthase A"/>
    <property type="match status" value="1"/>
</dbReference>
<dbReference type="Gene3D" id="3.30.70.660">
    <property type="entry name" value="Pseudouridine synthase I, catalytic domain, C-terminal subdomain"/>
    <property type="match status" value="1"/>
</dbReference>
<dbReference type="Gene3D" id="3.30.70.580">
    <property type="entry name" value="Pseudouridine synthase I, catalytic domain, N-terminal subdomain"/>
    <property type="match status" value="1"/>
</dbReference>
<dbReference type="HAMAP" id="MF_00171">
    <property type="entry name" value="TruA"/>
    <property type="match status" value="1"/>
</dbReference>
<dbReference type="InterPro" id="IPR020103">
    <property type="entry name" value="PsdUridine_synth_cat_dom_sf"/>
</dbReference>
<dbReference type="InterPro" id="IPR001406">
    <property type="entry name" value="PsdUridine_synth_TruA"/>
</dbReference>
<dbReference type="InterPro" id="IPR020097">
    <property type="entry name" value="PsdUridine_synth_TruA_a/b_dom"/>
</dbReference>
<dbReference type="InterPro" id="IPR020095">
    <property type="entry name" value="PsdUridine_synth_TruA_C"/>
</dbReference>
<dbReference type="InterPro" id="IPR020094">
    <property type="entry name" value="TruA/RsuA/RluB/E/F_N"/>
</dbReference>
<dbReference type="NCBIfam" id="TIGR00071">
    <property type="entry name" value="hisT_truA"/>
    <property type="match status" value="1"/>
</dbReference>
<dbReference type="PANTHER" id="PTHR11142">
    <property type="entry name" value="PSEUDOURIDYLATE SYNTHASE"/>
    <property type="match status" value="1"/>
</dbReference>
<dbReference type="PANTHER" id="PTHR11142:SF0">
    <property type="entry name" value="TRNA PSEUDOURIDINE SYNTHASE-LIKE 1"/>
    <property type="match status" value="1"/>
</dbReference>
<dbReference type="Pfam" id="PF01416">
    <property type="entry name" value="PseudoU_synth_1"/>
    <property type="match status" value="2"/>
</dbReference>
<dbReference type="PIRSF" id="PIRSF001430">
    <property type="entry name" value="tRNA_psdUrid_synth"/>
    <property type="match status" value="1"/>
</dbReference>
<dbReference type="SUPFAM" id="SSF55120">
    <property type="entry name" value="Pseudouridine synthase"/>
    <property type="match status" value="1"/>
</dbReference>
<name>TRUA_METPB</name>
<organism>
    <name type="scientific">Methylorubrum populi (strain ATCC BAA-705 / NCIMB 13946 / BJ001)</name>
    <name type="common">Methylobacterium populi</name>
    <dbReference type="NCBI Taxonomy" id="441620"/>
    <lineage>
        <taxon>Bacteria</taxon>
        <taxon>Pseudomonadati</taxon>
        <taxon>Pseudomonadota</taxon>
        <taxon>Alphaproteobacteria</taxon>
        <taxon>Hyphomicrobiales</taxon>
        <taxon>Methylobacteriaceae</taxon>
        <taxon>Methylorubrum</taxon>
    </lineage>
</organism>
<evidence type="ECO:0000255" key="1">
    <source>
        <dbReference type="HAMAP-Rule" id="MF_00171"/>
    </source>
</evidence>
<protein>
    <recommendedName>
        <fullName evidence="1">tRNA pseudouridine synthase A</fullName>
        <ecNumber evidence="1">5.4.99.12</ecNumber>
    </recommendedName>
    <alternativeName>
        <fullName evidence="1">tRNA pseudouridine(38-40) synthase</fullName>
    </alternativeName>
    <alternativeName>
        <fullName evidence="1">tRNA pseudouridylate synthase I</fullName>
    </alternativeName>
    <alternativeName>
        <fullName evidence="1">tRNA-uridine isomerase I</fullName>
    </alternativeName>
</protein>
<sequence>MPRYKLVIEYDGGPFCGWQRQADDPTVQAAIETAVTRFSGETARLTCAGRTDAGVHAIHQVAHLDLARDWRTDTVRDALNAHLRPQPIAIVSAEVVTHDFDARHSAIRRHYRYRILNRRSPAALTRAHVWHVPWPLDADLMHAAAQRLLGRHDFSAFRAAECQAASPVRTLEQLDVTRQRMGLFEEIVIATSARSFLHHQVRAMAGTLMLAGCRRLSADDVAEILATKAKHRCGPLAPACGLTFVGVDYDEK</sequence>
<reference key="1">
    <citation type="submission" date="2008-04" db="EMBL/GenBank/DDBJ databases">
        <title>Complete sequence of chromosome of Methylobacterium populi BJ001.</title>
        <authorList>
            <consortium name="US DOE Joint Genome Institute"/>
            <person name="Copeland A."/>
            <person name="Lucas S."/>
            <person name="Lapidus A."/>
            <person name="Glavina del Rio T."/>
            <person name="Dalin E."/>
            <person name="Tice H."/>
            <person name="Bruce D."/>
            <person name="Goodwin L."/>
            <person name="Pitluck S."/>
            <person name="Chertkov O."/>
            <person name="Brettin T."/>
            <person name="Detter J.C."/>
            <person name="Han C."/>
            <person name="Kuske C.R."/>
            <person name="Schmutz J."/>
            <person name="Larimer F."/>
            <person name="Land M."/>
            <person name="Hauser L."/>
            <person name="Kyrpides N."/>
            <person name="Mikhailova N."/>
            <person name="Marx C."/>
            <person name="Richardson P."/>
        </authorList>
    </citation>
    <scope>NUCLEOTIDE SEQUENCE [LARGE SCALE GENOMIC DNA]</scope>
    <source>
        <strain>ATCC BAA-705 / NCIMB 13946 / BJ001</strain>
    </source>
</reference>
<gene>
    <name evidence="1" type="primary">truA</name>
    <name type="ordered locus">Mpop_1600</name>
</gene>
<accession>B1ZGA6</accession>
<comment type="function">
    <text evidence="1">Formation of pseudouridine at positions 38, 39 and 40 in the anticodon stem and loop of transfer RNAs.</text>
</comment>
<comment type="catalytic activity">
    <reaction evidence="1">
        <text>uridine(38/39/40) in tRNA = pseudouridine(38/39/40) in tRNA</text>
        <dbReference type="Rhea" id="RHEA:22376"/>
        <dbReference type="Rhea" id="RHEA-COMP:10085"/>
        <dbReference type="Rhea" id="RHEA-COMP:10087"/>
        <dbReference type="ChEBI" id="CHEBI:65314"/>
        <dbReference type="ChEBI" id="CHEBI:65315"/>
        <dbReference type="EC" id="5.4.99.12"/>
    </reaction>
</comment>
<comment type="subunit">
    <text evidence="1">Homodimer.</text>
</comment>
<comment type="similarity">
    <text evidence="1">Belongs to the tRNA pseudouridine synthase TruA family.</text>
</comment>
<feature type="chain" id="PRO_1000097761" description="tRNA pseudouridine synthase A">
    <location>
        <begin position="1"/>
        <end position="252"/>
    </location>
</feature>
<feature type="active site" description="Nucleophile" evidence="1">
    <location>
        <position position="52"/>
    </location>
</feature>
<feature type="binding site" evidence="1">
    <location>
        <position position="111"/>
    </location>
    <ligand>
        <name>substrate</name>
    </ligand>
</feature>